<protein>
    <recommendedName>
        <fullName>Keratin-associated protein 1-3</fullName>
    </recommendedName>
    <alternativeName>
        <fullName>Keratin-associated protein 1.8</fullName>
    </alternativeName>
    <alternativeName>
        <fullName>Keratin-associated protein 1.9</fullName>
    </alternativeName>
</protein>
<sequence length="167" mass="17141">MTCCQTSFCGYPSCSTSGTCGSSCCQPSCCETSCCQPSCCQTSFCGFPSFSTSGTCSSSCCQPSCCETSCCQPSCCQTSSCGTGCGIGGGIGYGQEGSSGAVSTRIRWCRPDCRVEGTCLPPCCVVSCTPPTCCQLHHAEASCCRPSYCGQSCCRPVCCCYSCEPTC</sequence>
<comment type="function">
    <text>In the hair cortex, hair keratin intermediate filaments are embedded in an interfilamentous matrix, consisting of hair keratin-associated proteins (KRTAP), which are essential for the formation of a rigid and resistant hair shaft through their extensive disulfide bond cross-linking with abundant cysteine residues of hair keratins. The matrix proteins include the high-sulfur and high-glycine-tyrosine keratins.</text>
</comment>
<comment type="subunit">
    <text evidence="1">Interacts with hair keratins.</text>
</comment>
<comment type="interaction">
    <interactant intactId="EBI-11749135">
        <id>Q8IUG1</id>
    </interactant>
    <interactant intactId="EBI-12006944">
        <id>O43184-4</id>
        <label>ADAM12</label>
    </interactant>
    <organismsDiffer>false</organismsDiffer>
    <experiments>3</experiments>
</comment>
<comment type="interaction">
    <interactant intactId="EBI-11749135">
        <id>Q8IUG1</id>
    </interactant>
    <interactant intactId="EBI-1223922">
        <id>P20933</id>
        <label>AGA</label>
    </interactant>
    <organismsDiffer>false</organismsDiffer>
    <experiments>3</experiments>
</comment>
<comment type="interaction">
    <interactant intactId="EBI-11749135">
        <id>Q8IUG1</id>
    </interactant>
    <interactant intactId="EBI-2558314">
        <id>P43353</id>
        <label>ALDH3B1</label>
    </interactant>
    <organismsDiffer>false</organismsDiffer>
    <experiments>3</experiments>
</comment>
<comment type="interaction">
    <interactant intactId="EBI-11749135">
        <id>Q8IUG1</id>
    </interactant>
    <interactant intactId="EBI-1211484">
        <id>P05187</id>
        <label>ALPP</label>
    </interactant>
    <organismsDiffer>false</organismsDiffer>
    <experiments>3</experiments>
</comment>
<comment type="interaction">
    <interactant intactId="EBI-11749135">
        <id>Q8IUG1</id>
    </interactant>
    <interactant intactId="EBI-12006308">
        <id>Q7Z3C6-3</id>
        <label>ATG9A</label>
    </interactant>
    <organismsDiffer>false</organismsDiffer>
    <experiments>3</experiments>
</comment>
<comment type="interaction">
    <interactant intactId="EBI-11749135">
        <id>Q8IUG1</id>
    </interactant>
    <interactant intactId="EBI-10212133">
        <id>P50895</id>
        <label>BCAM</label>
    </interactant>
    <organismsDiffer>false</organismsDiffer>
    <experiments>3</experiments>
</comment>
<comment type="interaction">
    <interactant intactId="EBI-11749135">
        <id>Q8IUG1</id>
    </interactant>
    <interactant intactId="EBI-711810">
        <id>O14503</id>
        <label>BHLHE40</label>
    </interactant>
    <organismsDiffer>false</organismsDiffer>
    <experiments>3</experiments>
</comment>
<comment type="interaction">
    <interactant intactId="EBI-11749135">
        <id>Q8IUG1</id>
    </interactant>
    <interactant intactId="EBI-1035195">
        <id>P18075</id>
        <label>BMP7</label>
    </interactant>
    <organismsDiffer>false</organismsDiffer>
    <experiments>3</experiments>
</comment>
<comment type="interaction">
    <interactant intactId="EBI-11749135">
        <id>Q8IUG1</id>
    </interactant>
    <interactant intactId="EBI-6590057">
        <id>P35070</id>
        <label>BTC</label>
    </interactant>
    <organismsDiffer>false</organismsDiffer>
    <experiments>3</experiments>
</comment>
<comment type="interaction">
    <interactant intactId="EBI-11749135">
        <id>Q8IUG1</id>
    </interactant>
    <interactant intactId="EBI-741214">
        <id>Q9UFG5</id>
        <label>C19orf25</label>
    </interactant>
    <organismsDiffer>false</organismsDiffer>
    <experiments>3</experiments>
</comment>
<comment type="interaction">
    <interactant intactId="EBI-11749135">
        <id>Q8IUG1</id>
    </interactant>
    <interactant intactId="EBI-11603468">
        <id>Q2NKX9</id>
        <label>C2orf68</label>
    </interactant>
    <organismsDiffer>false</organismsDiffer>
    <experiments>3</experiments>
</comment>
<comment type="interaction">
    <interactant intactId="EBI-11749135">
        <id>Q8IUG1</id>
    </interactant>
    <interactant intactId="EBI-744545">
        <id>Q8NEC5</id>
        <label>CATSPER1</label>
    </interactant>
    <organismsDiffer>false</organismsDiffer>
    <experiments>3</experiments>
</comment>
<comment type="interaction">
    <interactant intactId="EBI-11749135">
        <id>Q8IUG1</id>
    </interactant>
    <interactant intactId="EBI-12139335">
        <id>Q8N6W0</id>
        <label>CELF5</label>
    </interactant>
    <organismsDiffer>false</organismsDiffer>
    <experiments>3</experiments>
</comment>
<comment type="interaction">
    <interactant intactId="EBI-11749135">
        <id>Q8IUG1</id>
    </interactant>
    <interactant intactId="EBI-741528">
        <id>Q9UKJ5</id>
        <label>CHIC2</label>
    </interactant>
    <organismsDiffer>false</organismsDiffer>
    <experiments>3</experiments>
</comment>
<comment type="interaction">
    <interactant intactId="EBI-11749135">
        <id>Q8IUG1</id>
    </interactant>
    <interactant intactId="EBI-947551">
        <id>Q9H2X0</id>
        <label>CHRD</label>
    </interactant>
    <organismsDiffer>false</organismsDiffer>
    <experiments>3</experiments>
</comment>
<comment type="interaction">
    <interactant intactId="EBI-11749135">
        <id>Q8IUG1</id>
    </interactant>
    <interactant intactId="EBI-11979451">
        <id>P07510-2</id>
        <label>CHRNG</label>
    </interactant>
    <organismsDiffer>false</organismsDiffer>
    <experiments>3</experiments>
</comment>
<comment type="interaction">
    <interactant intactId="EBI-11749135">
        <id>Q8IUG1</id>
    </interactant>
    <interactant intactId="EBI-751440">
        <id>P57739</id>
        <label>CLDN2</label>
    </interactant>
    <organismsDiffer>false</organismsDiffer>
    <experiments>3</experiments>
</comment>
<comment type="interaction">
    <interactant intactId="EBI-11749135">
        <id>Q8IUG1</id>
    </interactant>
    <interactant intactId="EBI-7868911">
        <id>Q8IZV2</id>
        <label>CMTM8</label>
    </interactant>
    <organismsDiffer>false</organismsDiffer>
    <experiments>3</experiments>
</comment>
<comment type="interaction">
    <interactant intactId="EBI-11749135">
        <id>Q8IUG1</id>
    </interactant>
    <interactant intactId="EBI-741032">
        <id>Q8NE01</id>
        <label>CNNM3</label>
    </interactant>
    <organismsDiffer>false</organismsDiffer>
    <experiments>3</experiments>
</comment>
<comment type="interaction">
    <interactant intactId="EBI-11749135">
        <id>Q8IUG1</id>
    </interactant>
    <interactant intactId="EBI-5458774">
        <id>Q86WW8</id>
        <label>COA5</label>
    </interactant>
    <organismsDiffer>false</organismsDiffer>
    <experiments>3</experiments>
</comment>
<comment type="interaction">
    <interactant intactId="EBI-11749135">
        <id>Q8IUG1</id>
    </interactant>
    <interactant intactId="EBI-747133">
        <id>P27658</id>
        <label>COL8A1</label>
    </interactant>
    <organismsDiffer>false</organismsDiffer>
    <experiments>3</experiments>
</comment>
<comment type="interaction">
    <interactant intactId="EBI-11749135">
        <id>Q8IUG1</id>
    </interactant>
    <interactant intactId="EBI-713677">
        <id>Q9UGL9</id>
        <label>CRCT1</label>
    </interactant>
    <organismsDiffer>false</organismsDiffer>
    <experiments>3</experiments>
</comment>
<comment type="interaction">
    <interactant intactId="EBI-11749135">
        <id>Q8IUG1</id>
    </interactant>
    <interactant intactId="EBI-10192698">
        <id>Q02930-3</id>
        <label>CREB5</label>
    </interactant>
    <organismsDiffer>false</organismsDiffer>
    <experiments>5</experiments>
</comment>
<comment type="interaction">
    <interactant intactId="EBI-11749135">
        <id>Q8IUG1</id>
    </interactant>
    <interactant intactId="EBI-3870390">
        <id>P06850</id>
        <label>CRH</label>
    </interactant>
    <organismsDiffer>false</organismsDiffer>
    <experiments>3</experiments>
</comment>
<comment type="interaction">
    <interactant intactId="EBI-11749135">
        <id>Q8IUG1</id>
    </interactant>
    <interactant intactId="EBI-2212355">
        <id>Q49AN0</id>
        <label>CRY2</label>
    </interactant>
    <organismsDiffer>false</organismsDiffer>
    <experiments>3</experiments>
</comment>
<comment type="interaction">
    <interactant intactId="EBI-11749135">
        <id>Q8IUG1</id>
    </interactant>
    <interactant intactId="EBI-747082">
        <id>Q9NSA3</id>
        <label>CTNNBIP1</label>
    </interactant>
    <organismsDiffer>false</organismsDiffer>
    <experiments>3</experiments>
</comment>
<comment type="interaction">
    <interactant intactId="EBI-11749135">
        <id>Q8IUG1</id>
    </interactant>
    <interactant intactId="EBI-14156412">
        <id>Q08AG9</id>
        <label>CYP21A2</label>
    </interactant>
    <organismsDiffer>false</organismsDiffer>
    <experiments>3</experiments>
</comment>
<comment type="interaction">
    <interactant intactId="EBI-11749135">
        <id>Q8IUG1</id>
    </interactant>
    <interactant intactId="EBI-3867333">
        <id>A8MQ03</id>
        <label>CYSRT1</label>
    </interactant>
    <organismsDiffer>false</organismsDiffer>
    <experiments>9</experiments>
</comment>
<comment type="interaction">
    <interactant intactId="EBI-11749135">
        <id>Q8IUG1</id>
    </interactant>
    <interactant intactId="EBI-746300">
        <id>Q96LJ7</id>
        <label>DHRS1</label>
    </interactant>
    <organismsDiffer>false</organismsDiffer>
    <experiments>3</experiments>
</comment>
<comment type="interaction">
    <interactant intactId="EBI-11749135">
        <id>Q8IUG1</id>
    </interactant>
    <interactant intactId="EBI-1752541">
        <id>O95886</id>
        <label>DLGAP3</label>
    </interactant>
    <organismsDiffer>false</organismsDiffer>
    <experiments>3</experiments>
</comment>
<comment type="interaction">
    <interactant intactId="EBI-11749135">
        <id>Q8IUG1</id>
    </interactant>
    <interactant intactId="EBI-9679045">
        <id>Q9NQL9</id>
        <label>DMRT3</label>
    </interactant>
    <organismsDiffer>false</organismsDiffer>
    <experiments>3</experiments>
</comment>
<comment type="interaction">
    <interactant intactId="EBI-11749135">
        <id>Q8IUG1</id>
    </interactant>
    <interactant intactId="EBI-448771">
        <id>Q92608</id>
        <label>DOCK2</label>
    </interactant>
    <organismsDiffer>false</organismsDiffer>
    <experiments>3</experiments>
</comment>
<comment type="interaction">
    <interactant intactId="EBI-11749135">
        <id>Q8IUG1</id>
    </interactant>
    <interactant intactId="EBI-2859983">
        <id>P42892</id>
        <label>ECE1</label>
    </interactant>
    <organismsDiffer>false</organismsDiffer>
    <experiments>3</experiments>
</comment>
<comment type="interaction">
    <interactant intactId="EBI-11749135">
        <id>Q8IUG1</id>
    </interactant>
    <interactant intactId="EBI-741068">
        <id>Q969U6</id>
        <label>FBXW5</label>
    </interactant>
    <organismsDiffer>false</organismsDiffer>
    <experiments>3</experiments>
</comment>
<comment type="interaction">
    <interactant intactId="EBI-11749135">
        <id>Q8IUG1</id>
    </interactant>
    <interactant intactId="EBI-7466542">
        <id>P43220</id>
        <label>GLP1R</label>
    </interactant>
    <organismsDiffer>false</organismsDiffer>
    <experiments>3</experiments>
</comment>
<comment type="interaction">
    <interactant intactId="EBI-11749135">
        <id>Q8IUG1</id>
    </interactant>
    <interactant intactId="EBI-11975289">
        <id>Q9Y223-2</id>
        <label>GNE</label>
    </interactant>
    <organismsDiffer>false</organismsDiffer>
    <experiments>3</experiments>
</comment>
<comment type="interaction">
    <interactant intactId="EBI-11749135">
        <id>Q8IUG1</id>
    </interactant>
    <interactant intactId="EBI-353467">
        <id>P09211</id>
        <label>GSTP1</label>
    </interactant>
    <organismsDiffer>false</organismsDiffer>
    <experiments>3</experiments>
</comment>
<comment type="interaction">
    <interactant intactId="EBI-11749135">
        <id>Q8IUG1</id>
    </interactant>
    <interactant intactId="EBI-9834454">
        <id>P08631-2</id>
        <label>HCK</label>
    </interactant>
    <organismsDiffer>false</organismsDiffer>
    <experiments>3</experiments>
</comment>
<comment type="interaction">
    <interactant intactId="EBI-11749135">
        <id>Q8IUG1</id>
    </interactant>
    <interactant intactId="EBI-747421">
        <id>Q03014</id>
        <label>HHEX</label>
    </interactant>
    <organismsDiffer>false</organismsDiffer>
    <experiments>3</experiments>
</comment>
<comment type="interaction">
    <interactant intactId="EBI-11749135">
        <id>Q8IUG1</id>
    </interactant>
    <interactant intactId="EBI-12083878">
        <id>Q96JK4-2</id>
        <label>HHIPL1</label>
    </interactant>
    <organismsDiffer>false</organismsDiffer>
    <experiments>3</experiments>
</comment>
<comment type="interaction">
    <interactant intactId="EBI-11749135">
        <id>Q8IUG1</id>
    </interactant>
    <interactant intactId="EBI-740785">
        <id>P49639</id>
        <label>HOXA1</label>
    </interactant>
    <organismsDiffer>false</organismsDiffer>
    <experiments>5</experiments>
</comment>
<comment type="interaction">
    <interactant intactId="EBI-11749135">
        <id>Q8IUG1</id>
    </interactant>
    <interactant intactId="EBI-745290">
        <id>P17482</id>
        <label>HOXB9</label>
    </interactant>
    <organismsDiffer>false</organismsDiffer>
    <experiments>3</experiments>
</comment>
<comment type="interaction">
    <interactant intactId="EBI-11749135">
        <id>Q8IUG1</id>
    </interactant>
    <interactant intactId="EBI-1752118">
        <id>P31273</id>
        <label>HOXC8</label>
    </interactant>
    <organismsDiffer>false</organismsDiffer>
    <experiments>3</experiments>
</comment>
<comment type="interaction">
    <interactant intactId="EBI-11749135">
        <id>Q8IUG1</id>
    </interactant>
    <interactant intactId="EBI-749311">
        <id>P37235</id>
        <label>HPCAL1</label>
    </interactant>
    <organismsDiffer>false</organismsDiffer>
    <experiments>3</experiments>
</comment>
<comment type="interaction">
    <interactant intactId="EBI-11749135">
        <id>Q8IUG1</id>
    </interactant>
    <interactant intactId="EBI-3918847">
        <id>Q9H2F3</id>
        <label>HSD3B7</label>
    </interactant>
    <organismsDiffer>false</organismsDiffer>
    <experiments>3</experiments>
</comment>
<comment type="interaction">
    <interactant intactId="EBI-11749135">
        <id>Q8IUG1</id>
    </interactant>
    <interactant intactId="EBI-8293590">
        <id>Q969P0</id>
        <label>IGSF8</label>
    </interactant>
    <organismsDiffer>false</organismsDiffer>
    <experiments>3</experiments>
</comment>
<comment type="interaction">
    <interactant intactId="EBI-11749135">
        <id>Q8IUG1</id>
    </interactant>
    <interactant intactId="EBI-1031632">
        <id>P22301</id>
        <label>IL10</label>
    </interactant>
    <organismsDiffer>false</organismsDiffer>
    <experiments>3</experiments>
</comment>
<comment type="interaction">
    <interactant intactId="EBI-11749135">
        <id>Q8IUG1</id>
    </interactant>
    <interactant intactId="EBI-17178971">
        <id>Q14005-2</id>
        <label>IL16</label>
    </interactant>
    <organismsDiffer>false</organismsDiffer>
    <experiments>3</experiments>
</comment>
<comment type="interaction">
    <interactant intactId="EBI-11749135">
        <id>Q8IUG1</id>
    </interactant>
    <interactant intactId="EBI-9092209">
        <id>Q92835-2</id>
        <label>INPP5D</label>
    </interactant>
    <organismsDiffer>false</organismsDiffer>
    <experiments>3</experiments>
</comment>
<comment type="interaction">
    <interactant intactId="EBI-11749135">
        <id>Q8IUG1</id>
    </interactant>
    <interactant intactId="EBI-7090529">
        <id>P01308</id>
        <label>INS</label>
    </interactant>
    <organismsDiffer>false</organismsDiffer>
    <experiments>3</experiments>
</comment>
<comment type="interaction">
    <interactant intactId="EBI-11749135">
        <id>Q8IUG1</id>
    </interactant>
    <interactant intactId="EBI-11051601">
        <id>P16144-2</id>
        <label>ITGB4</label>
    </interactant>
    <organismsDiffer>false</organismsDiffer>
    <experiments>3</experiments>
</comment>
<comment type="interaction">
    <interactant intactId="EBI-11749135">
        <id>Q8IUG1</id>
    </interactant>
    <interactant intactId="EBI-1223434">
        <id>P18084</id>
        <label>ITGB5</label>
    </interactant>
    <organismsDiffer>false</organismsDiffer>
    <experiments>3</experiments>
</comment>
<comment type="interaction">
    <interactant intactId="EBI-11749135">
        <id>Q8IUG1</id>
    </interactant>
    <interactant intactId="EBI-2510602">
        <id>Q15040</id>
        <label>JOSD1</label>
    </interactant>
    <organismsDiffer>false</organismsDiffer>
    <experiments>3</experiments>
</comment>
<comment type="interaction">
    <interactant intactId="EBI-11749135">
        <id>Q8IUG1</id>
    </interactant>
    <interactant intactId="EBI-6426443">
        <id>Q2WGJ6</id>
        <label>KLHL38</label>
    </interactant>
    <organismsDiffer>false</organismsDiffer>
    <experiments>3</experiments>
</comment>
<comment type="interaction">
    <interactant intactId="EBI-11749135">
        <id>Q8IUG1</id>
    </interactant>
    <interactant intactId="EBI-10981970">
        <id>Q5T749</id>
        <label>KPRP</label>
    </interactant>
    <organismsDiffer>false</organismsDiffer>
    <experiments>3</experiments>
</comment>
<comment type="interaction">
    <interactant intactId="EBI-11749135">
        <id>Q8IUG1</id>
    </interactant>
    <interactant intactId="EBI-10217483">
        <id>P60412</id>
        <label>KRTAP10-11</label>
    </interactant>
    <organismsDiffer>false</organismsDiffer>
    <experiments>3</experiments>
</comment>
<comment type="interaction">
    <interactant intactId="EBI-11749135">
        <id>Q8IUG1</id>
    </interactant>
    <interactant intactId="EBI-10172150">
        <id>P60370</id>
        <label>KRTAP10-5</label>
    </interactant>
    <organismsDiffer>false</organismsDiffer>
    <experiments>3</experiments>
</comment>
<comment type="interaction">
    <interactant intactId="EBI-11749135">
        <id>Q8IUG1</id>
    </interactant>
    <interactant intactId="EBI-10171774">
        <id>P60410</id>
        <label>KRTAP10-8</label>
    </interactant>
    <organismsDiffer>false</organismsDiffer>
    <experiments>3</experiments>
</comment>
<comment type="interaction">
    <interactant intactId="EBI-11749135">
        <id>Q8IUG1</id>
    </interactant>
    <interactant intactId="EBI-10172052">
        <id>P60411</id>
        <label>KRTAP10-9</label>
    </interactant>
    <organismsDiffer>false</organismsDiffer>
    <experiments>3</experiments>
</comment>
<comment type="interaction">
    <interactant intactId="EBI-11749135">
        <id>Q8IUG1</id>
    </interactant>
    <interactant intactId="EBI-10210845">
        <id>P59990</id>
        <label>KRTAP12-1</label>
    </interactant>
    <organismsDiffer>false</organismsDiffer>
    <experiments>3</experiments>
</comment>
<comment type="interaction">
    <interactant intactId="EBI-11749135">
        <id>Q8IUG1</id>
    </interactant>
    <interactant intactId="EBI-10302392">
        <id>Q9BYQ6</id>
        <label>KRTAP4-11</label>
    </interactant>
    <organismsDiffer>false</organismsDiffer>
    <experiments>3</experiments>
</comment>
<comment type="interaction">
    <interactant intactId="EBI-11749135">
        <id>Q8IUG1</id>
    </interactant>
    <interactant intactId="EBI-739863">
        <id>Q9BQ66</id>
        <label>KRTAP4-12</label>
    </interactant>
    <organismsDiffer>false</organismsDiffer>
    <experiments>3</experiments>
</comment>
<comment type="interaction">
    <interactant intactId="EBI-11749135">
        <id>Q8IUG1</id>
    </interactant>
    <interactant intactId="EBI-10172511">
        <id>Q9BYR5</id>
        <label>KRTAP4-2</label>
    </interactant>
    <organismsDiffer>false</organismsDiffer>
    <experiments>3</experiments>
</comment>
<comment type="interaction">
    <interactant intactId="EBI-11749135">
        <id>Q8IUG1</id>
    </interactant>
    <interactant intactId="EBI-11958132">
        <id>Q9BYR3</id>
        <label>KRTAP4-4</label>
    </interactant>
    <organismsDiffer>false</organismsDiffer>
    <experiments>3</experiments>
</comment>
<comment type="interaction">
    <interactant intactId="EBI-11749135">
        <id>Q8IUG1</id>
    </interactant>
    <interactant intactId="EBI-11993254">
        <id>Q9BYR2</id>
        <label>KRTAP4-5</label>
    </interactant>
    <organismsDiffer>false</organismsDiffer>
    <experiments>3</experiments>
</comment>
<comment type="interaction">
    <interactant intactId="EBI-11749135">
        <id>Q8IUG1</id>
    </interactant>
    <interactant intactId="EBI-11993296">
        <id>Q6L8G4</id>
        <label>KRTAP5-11</label>
    </interactant>
    <organismsDiffer>false</organismsDiffer>
    <experiments>3</experiments>
</comment>
<comment type="interaction">
    <interactant intactId="EBI-11749135">
        <id>Q8IUG1</id>
    </interactant>
    <interactant intactId="EBI-11974251">
        <id>Q6L8H2</id>
        <label>KRTAP5-3</label>
    </interactant>
    <organismsDiffer>false</organismsDiffer>
    <experiments>3</experiments>
</comment>
<comment type="interaction">
    <interactant intactId="EBI-11749135">
        <id>Q8IUG1</id>
    </interactant>
    <interactant intactId="EBI-11963072">
        <id>Q6L8H1</id>
        <label>KRTAP5-4</label>
    </interactant>
    <organismsDiffer>false</organismsDiffer>
    <experiments>3</experiments>
</comment>
<comment type="interaction">
    <interactant intactId="EBI-11749135">
        <id>Q8IUG1</id>
    </interactant>
    <interactant intactId="EBI-10250562">
        <id>Q6L8G9</id>
        <label>KRTAP5-6</label>
    </interactant>
    <organismsDiffer>false</organismsDiffer>
    <experiments>3</experiments>
</comment>
<comment type="interaction">
    <interactant intactId="EBI-11749135">
        <id>Q8IUG1</id>
    </interactant>
    <interactant intactId="EBI-3958099">
        <id>P26371</id>
        <label>KRTAP5-9</label>
    </interactant>
    <organismsDiffer>false</organismsDiffer>
    <experiments>3</experiments>
</comment>
<comment type="interaction">
    <interactant intactId="EBI-11749135">
        <id>Q8IUG1</id>
    </interactant>
    <interactant intactId="EBI-1044640">
        <id>Q9BYQ4</id>
        <label>KRTAP9-2</label>
    </interactant>
    <organismsDiffer>false</organismsDiffer>
    <experiments>3</experiments>
</comment>
<comment type="interaction">
    <interactant intactId="EBI-11749135">
        <id>Q8IUG1</id>
    </interactant>
    <interactant intactId="EBI-1043191">
        <id>Q9BYQ3</id>
        <label>KRTAP9-3</label>
    </interactant>
    <organismsDiffer>false</organismsDiffer>
    <experiments>3</experiments>
</comment>
<comment type="interaction">
    <interactant intactId="EBI-11749135">
        <id>Q8IUG1</id>
    </interactant>
    <interactant intactId="EBI-11958364">
        <id>Q9BYQ0</id>
        <label>KRTAP9-8</label>
    </interactant>
    <organismsDiffer>false</organismsDiffer>
    <experiments>3</experiments>
</comment>
<comment type="interaction">
    <interactant intactId="EBI-11749135">
        <id>Q8IUG1</id>
    </interactant>
    <interactant intactId="EBI-11962058">
        <id>Q5T7P2</id>
        <label>LCE1A</label>
    </interactant>
    <organismsDiffer>false</organismsDiffer>
    <experiments>5</experiments>
</comment>
<comment type="interaction">
    <interactant intactId="EBI-11749135">
        <id>Q8IUG1</id>
    </interactant>
    <interactant intactId="EBI-10245913">
        <id>Q5T7P3</id>
        <label>LCE1B</label>
    </interactant>
    <organismsDiffer>false</organismsDiffer>
    <experiments>5</experiments>
</comment>
<comment type="interaction">
    <interactant intactId="EBI-11749135">
        <id>Q8IUG1</id>
    </interactant>
    <interactant intactId="EBI-11741311">
        <id>Q5T752</id>
        <label>LCE1D</label>
    </interactant>
    <organismsDiffer>false</organismsDiffer>
    <experiments>3</experiments>
</comment>
<comment type="interaction">
    <interactant intactId="EBI-11749135">
        <id>Q8IUG1</id>
    </interactant>
    <interactant intactId="EBI-11955335">
        <id>Q5T753</id>
        <label>LCE1E</label>
    </interactant>
    <organismsDiffer>false</organismsDiffer>
    <experiments>3</experiments>
</comment>
<comment type="interaction">
    <interactant intactId="EBI-11749135">
        <id>Q8IUG1</id>
    </interactant>
    <interactant intactId="EBI-11958008">
        <id>Q5T754</id>
        <label>LCE1F</label>
    </interactant>
    <organismsDiffer>false</organismsDiffer>
    <experiments>3</experiments>
</comment>
<comment type="interaction">
    <interactant intactId="EBI-11749135">
        <id>Q8IUG1</id>
    </interactant>
    <interactant intactId="EBI-10246607">
        <id>Q5TA79</id>
        <label>LCE2A</label>
    </interactant>
    <organismsDiffer>false</organismsDiffer>
    <experiments>3</experiments>
</comment>
<comment type="interaction">
    <interactant intactId="EBI-11749135">
        <id>Q8IUG1</id>
    </interactant>
    <interactant intactId="EBI-11478468">
        <id>O14633</id>
        <label>LCE2B</label>
    </interactant>
    <organismsDiffer>false</organismsDiffer>
    <experiments>3</experiments>
</comment>
<comment type="interaction">
    <interactant intactId="EBI-11749135">
        <id>Q8IUG1</id>
    </interactant>
    <interactant intactId="EBI-11973993">
        <id>Q5TA81</id>
        <label>LCE2C</label>
    </interactant>
    <organismsDiffer>false</organismsDiffer>
    <experiments>3</experiments>
</comment>
<comment type="interaction">
    <interactant intactId="EBI-11749135">
        <id>Q8IUG1</id>
    </interactant>
    <interactant intactId="EBI-10246750">
        <id>Q5TA82</id>
        <label>LCE2D</label>
    </interactant>
    <organismsDiffer>false</organismsDiffer>
    <experiments>3</experiments>
</comment>
<comment type="interaction">
    <interactant intactId="EBI-11749135">
        <id>Q8IUG1</id>
    </interactant>
    <interactant intactId="EBI-9394625">
        <id>Q5TA76</id>
        <label>LCE3A</label>
    </interactant>
    <organismsDiffer>false</organismsDiffer>
    <experiments>5</experiments>
</comment>
<comment type="interaction">
    <interactant intactId="EBI-11749135">
        <id>Q8IUG1</id>
    </interactant>
    <interactant intactId="EBI-11974495">
        <id>Q5TA77</id>
        <label>LCE3B</label>
    </interactant>
    <organismsDiffer>false</organismsDiffer>
    <experiments>3</experiments>
</comment>
<comment type="interaction">
    <interactant intactId="EBI-11749135">
        <id>Q8IUG1</id>
    </interactant>
    <interactant intactId="EBI-10245291">
        <id>Q5T5A8</id>
        <label>LCE3C</label>
    </interactant>
    <organismsDiffer>false</organismsDiffer>
    <experiments>3</experiments>
</comment>
<comment type="interaction">
    <interactant intactId="EBI-11749135">
        <id>Q8IUG1</id>
    </interactant>
    <interactant intactId="EBI-6658837">
        <id>Q9BYE3</id>
        <label>LCE3D</label>
    </interactant>
    <organismsDiffer>false</organismsDiffer>
    <experiments>3</experiments>
</comment>
<comment type="interaction">
    <interactant intactId="EBI-11749135">
        <id>Q8IUG1</id>
    </interactant>
    <interactant intactId="EBI-10245456">
        <id>Q5T5B0</id>
        <label>LCE3E</label>
    </interactant>
    <organismsDiffer>false</organismsDiffer>
    <experiments>3</experiments>
</comment>
<comment type="interaction">
    <interactant intactId="EBI-11749135">
        <id>Q8IUG1</id>
    </interactant>
    <interactant intactId="EBI-10246358">
        <id>Q5TA78</id>
        <label>LCE4A</label>
    </interactant>
    <organismsDiffer>false</organismsDiffer>
    <experiments>3</experiments>
</comment>
<comment type="interaction">
    <interactant intactId="EBI-11749135">
        <id>Q8IUG1</id>
    </interactant>
    <interactant intactId="EBI-11955689">
        <id>Q5TCM9</id>
        <label>LCE5A</label>
    </interactant>
    <organismsDiffer>false</organismsDiffer>
    <experiments>3</experiments>
</comment>
<comment type="interaction">
    <interactant intactId="EBI-11749135">
        <id>Q8IUG1</id>
    </interactant>
    <interactant intactId="EBI-2341787">
        <id>Q17RB8</id>
        <label>LONRF1</label>
    </interactant>
    <organismsDiffer>false</organismsDiffer>
    <experiments>3</experiments>
</comment>
<comment type="interaction">
    <interactant intactId="EBI-11749135">
        <id>Q8IUG1</id>
    </interactant>
    <interactant intactId="EBI-7910762">
        <id>Q6PJG9</id>
        <label>LRFN4</label>
    </interactant>
    <organismsDiffer>false</organismsDiffer>
    <experiments>3</experiments>
</comment>
<comment type="interaction">
    <interactant intactId="EBI-11749135">
        <id>Q8IUG1</id>
    </interactant>
    <interactant intactId="EBI-947402">
        <id>O60336</id>
        <label>MAPKBP1</label>
    </interactant>
    <organismsDiffer>false</organismsDiffer>
    <experiments>3</experiments>
</comment>
<comment type="interaction">
    <interactant intactId="EBI-11749135">
        <id>Q8IUG1</id>
    </interactant>
    <interactant intactId="EBI-1757866">
        <id>P00540</id>
        <label>MOS</label>
    </interactant>
    <organismsDiffer>false</organismsDiffer>
    <experiments>3</experiments>
</comment>
<comment type="interaction">
    <interactant intactId="EBI-11749135">
        <id>Q8IUG1</id>
    </interactant>
    <interactant intactId="EBI-1188238">
        <id>P48039</id>
        <label>MTNR1A</label>
    </interactant>
    <organismsDiffer>false</organismsDiffer>
    <experiments>3</experiments>
</comment>
<comment type="interaction">
    <interactant intactId="EBI-11749135">
        <id>Q8IUG1</id>
    </interactant>
    <interactant intactId="EBI-741574">
        <id>Q9BW11</id>
        <label>MXD3</label>
    </interactant>
    <organismsDiffer>false</organismsDiffer>
    <experiments>3</experiments>
</comment>
<comment type="interaction">
    <interactant intactId="EBI-11749135">
        <id>Q8IUG1</id>
    </interactant>
    <interactant intactId="EBI-10211940">
        <id>P50539-3</id>
        <label>MXI1</label>
    </interactant>
    <organismsDiffer>false</organismsDiffer>
    <experiments>3</experiments>
</comment>
<comment type="interaction">
    <interactant intactId="EBI-11749135">
        <id>Q8IUG1</id>
    </interactant>
    <interactant intactId="EBI-2858213">
        <id>Q86VE0</id>
        <label>MYPOP</label>
    </interactant>
    <organismsDiffer>false</organismsDiffer>
    <experiments>3</experiments>
</comment>
<comment type="interaction">
    <interactant intactId="EBI-11749135">
        <id>Q8IUG1</id>
    </interactant>
    <interactant intactId="EBI-8650724">
        <id>Q8IW45</id>
        <label>NAXD</label>
    </interactant>
    <organismsDiffer>false</organismsDiffer>
    <experiments>3</experiments>
</comment>
<comment type="interaction">
    <interactant intactId="EBI-11749135">
        <id>Q8IUG1</id>
    </interactant>
    <interactant intactId="EBI-6979889">
        <id>Q92692-2</id>
        <label>NECTIN2</label>
    </interactant>
    <organismsDiffer>false</organismsDiffer>
    <experiments>3</experiments>
</comment>
<comment type="interaction">
    <interactant intactId="EBI-11749135">
        <id>Q8IUG1</id>
    </interactant>
    <interactant intactId="EBI-12106440">
        <id>Q9NQS3-2</id>
        <label>NECTIN3</label>
    </interactant>
    <organismsDiffer>false</organismsDiffer>
    <experiments>3</experiments>
</comment>
<comment type="interaction">
    <interactant intactId="EBI-11749135">
        <id>Q8IUG1</id>
    </interactant>
    <interactant intactId="EBI-10261509">
        <id>Q8IV28</id>
        <label>NID2</label>
    </interactant>
    <organismsDiffer>false</organismsDiffer>
    <experiments>3</experiments>
</comment>
<comment type="interaction">
    <interactant intactId="EBI-11749135">
        <id>Q8IUG1</id>
    </interactant>
    <interactant intactId="EBI-10210351">
        <id>P48645</id>
        <label>NMU</label>
    </interactant>
    <organismsDiffer>false</organismsDiffer>
    <experiments>3</experiments>
</comment>
<comment type="interaction">
    <interactant intactId="EBI-11749135">
        <id>Q8IUG1</id>
    </interactant>
    <interactant intactId="EBI-10210114">
        <id>P48146</id>
        <label>NPBWR2</label>
    </interactant>
    <organismsDiffer>false</organismsDiffer>
    <experiments>3</experiments>
</comment>
<comment type="interaction">
    <interactant intactId="EBI-11749135">
        <id>Q8IUG1</id>
    </interactant>
    <interactant intactId="EBI-748927">
        <id>Q9NQX5</id>
        <label>NPDC1</label>
    </interactant>
    <organismsDiffer>false</organismsDiffer>
    <experiments>3</experiments>
</comment>
<comment type="interaction">
    <interactant intactId="EBI-11749135">
        <id>Q8IUG1</id>
    </interactant>
    <interactant intactId="EBI-10250949">
        <id>Q6NSM0</id>
        <label>NR1D2</label>
    </interactant>
    <organismsDiffer>false</organismsDiffer>
    <experiments>3</experiments>
</comment>
<comment type="interaction">
    <interactant intactId="EBI-11749135">
        <id>Q8IUG1</id>
    </interactant>
    <interactant intactId="EBI-1210753">
        <id>Q7Z417</id>
        <label>NUFIP2</label>
    </interactant>
    <organismsDiffer>false</organismsDiffer>
    <experiments>3</experiments>
</comment>
<comment type="interaction">
    <interactant intactId="EBI-11749135">
        <id>Q8IUG1</id>
    </interactant>
    <interactant intactId="EBI-721741">
        <id>O95897</id>
        <label>OLFM2</label>
    </interactant>
    <organismsDiffer>false</organismsDiffer>
    <experiments>3</experiments>
</comment>
<comment type="interaction">
    <interactant intactId="EBI-11749135">
        <id>Q8IUG1</id>
    </interactant>
    <interactant intactId="EBI-740446">
        <id>P32242</id>
        <label>OTX1</label>
    </interactant>
    <organismsDiffer>false</organismsDiffer>
    <experiments>7</experiments>
</comment>
<comment type="interaction">
    <interactant intactId="EBI-11749135">
        <id>Q8IUG1</id>
    </interactant>
    <interactant intactId="EBI-12149899">
        <id>Q8IVL6-2</id>
        <label>P3H3</label>
    </interactant>
    <organismsDiffer>false</organismsDiffer>
    <experiments>3</experiments>
</comment>
<comment type="interaction">
    <interactant intactId="EBI-11749135">
        <id>Q8IUG1</id>
    </interactant>
    <interactant intactId="EBI-11524542">
        <id>O76083-2</id>
        <label>PDE9A</label>
    </interactant>
    <organismsDiffer>false</organismsDiffer>
    <experiments>3</experiments>
</comment>
<comment type="interaction">
    <interactant intactId="EBI-11749135">
        <id>Q8IUG1</id>
    </interactant>
    <interactant intactId="EBI-12094562">
        <id>Q14554-2</id>
        <label>PDIA5</label>
    </interactant>
    <organismsDiffer>false</organismsDiffer>
    <experiments>3</experiments>
</comment>
<comment type="interaction">
    <interactant intactId="EBI-11749135">
        <id>Q8IUG1</id>
    </interactant>
    <interactant intactId="EBI-14131832">
        <id>Q8N4B1-4</id>
        <label>PHETA1</label>
    </interactant>
    <organismsDiffer>false</organismsDiffer>
    <experiments>3</experiments>
</comment>
<comment type="interaction">
    <interactant intactId="EBI-11749135">
        <id>Q8IUG1</id>
    </interactant>
    <interactant intactId="EBI-14084211">
        <id>A2BDE7</id>
        <label>PHLDA1</label>
    </interactant>
    <organismsDiffer>false</organismsDiffer>
    <experiments>3</experiments>
</comment>
<comment type="interaction">
    <interactant intactId="EBI-11749135">
        <id>Q8IUG1</id>
    </interactant>
    <interactant intactId="EBI-2908273">
        <id>Q96S52</id>
        <label>PIGS</label>
    </interactant>
    <organismsDiffer>false</organismsDiffer>
    <experiments>3</experiments>
</comment>
<comment type="interaction">
    <interactant intactId="EBI-11749135">
        <id>Q8IUG1</id>
    </interactant>
    <interactant intactId="EBI-12014286">
        <id>Q494U1-3</id>
        <label>PLEKHN1</label>
    </interactant>
    <organismsDiffer>false</organismsDiffer>
    <experiments>3</experiments>
</comment>
<comment type="interaction">
    <interactant intactId="EBI-11749135">
        <id>Q8IUG1</id>
    </interactant>
    <interactant intactId="EBI-1383852">
        <id>P54646</id>
        <label>PRKAA2</label>
    </interactant>
    <organismsDiffer>false</organismsDiffer>
    <experiments>3</experiments>
</comment>
<comment type="interaction">
    <interactant intactId="EBI-11749135">
        <id>Q8IUG1</id>
    </interactant>
    <interactant intactId="EBI-1053424">
        <id>O43741</id>
        <label>PRKAB2</label>
    </interactant>
    <organismsDiffer>false</organismsDiffer>
    <experiments>5</experiments>
</comment>
<comment type="interaction">
    <interactant intactId="EBI-11749135">
        <id>Q8IUG1</id>
    </interactant>
    <interactant intactId="EBI-1567797">
        <id>Q8WWY3</id>
        <label>PRPF31</label>
    </interactant>
    <organismsDiffer>false</organismsDiffer>
    <experiments>3</experiments>
</comment>
<comment type="interaction">
    <interactant intactId="EBI-11749135">
        <id>Q8IUG1</id>
    </interactant>
    <interactant intactId="EBI-359352">
        <id>P25786</id>
        <label>PSMA1</label>
    </interactant>
    <organismsDiffer>false</organismsDiffer>
    <experiments>3</experiments>
</comment>
<comment type="interaction">
    <interactant intactId="EBI-11749135">
        <id>Q8IUG1</id>
    </interactant>
    <interactant intactId="EBI-2803245">
        <id>Q13308</id>
        <label>PTK7</label>
    </interactant>
    <organismsDiffer>false</organismsDiffer>
    <experiments>3</experiments>
</comment>
<comment type="interaction">
    <interactant intactId="EBI-11749135">
        <id>Q8IUG1</id>
    </interactant>
    <interactant intactId="EBI-7199479">
        <id>Q8WUK0</id>
        <label>PTPMT1</label>
    </interactant>
    <organismsDiffer>false</organismsDiffer>
    <experiments>3</experiments>
</comment>
<comment type="interaction">
    <interactant intactId="EBI-11749135">
        <id>Q8IUG1</id>
    </interactant>
    <interactant intactId="EBI-3919694">
        <id>P15151</id>
        <label>PVR</label>
    </interactant>
    <organismsDiffer>false</organismsDiffer>
    <experiments>3</experiments>
</comment>
<comment type="interaction">
    <interactant intactId="EBI-11749135">
        <id>Q8IUG1</id>
    </interactant>
    <interactant intactId="EBI-948428">
        <id>Q9Y2K5</id>
        <label>R3HDM2</label>
    </interactant>
    <organismsDiffer>false</organismsDiffer>
    <experiments>3</experiments>
</comment>
<comment type="interaction">
    <interactant intactId="EBI-11749135">
        <id>Q8IUG1</id>
    </interactant>
    <interactant intactId="EBI-744023">
        <id>Q9BTL3</id>
        <label>RAMAC</label>
    </interactant>
    <organismsDiffer>false</organismsDiffer>
    <experiments>3</experiments>
</comment>
<comment type="interaction">
    <interactant intactId="EBI-11749135">
        <id>Q8IUG1</id>
    </interactant>
    <interactant intactId="EBI-740818">
        <id>Q9Y272</id>
        <label>RASD1</label>
    </interactant>
    <organismsDiffer>false</organismsDiffer>
    <experiments>3</experiments>
</comment>
<comment type="interaction">
    <interactant intactId="EBI-11749135">
        <id>Q8IUG1</id>
    </interactant>
    <interactant intactId="EBI-355963">
        <id>P04843</id>
        <label>RPN1</label>
    </interactant>
    <organismsDiffer>false</organismsDiffer>
    <experiments>3</experiments>
</comment>
<comment type="interaction">
    <interactant intactId="EBI-11749135">
        <id>Q8IUG1</id>
    </interactant>
    <interactant intactId="EBI-4479407">
        <id>Q86WX3</id>
        <label>RPS19BP1</label>
    </interactant>
    <organismsDiffer>false</organismsDiffer>
    <experiments>3</experiments>
</comment>
<comment type="interaction">
    <interactant intactId="EBI-11749135">
        <id>Q8IUG1</id>
    </interactant>
    <interactant intactId="EBI-2561646">
        <id>Q86UD0</id>
        <label>SAPCD2</label>
    </interactant>
    <organismsDiffer>false</organismsDiffer>
    <experiments>3</experiments>
</comment>
<comment type="interaction">
    <interactant intactId="EBI-11749135">
        <id>Q8IUG1</id>
    </interactant>
    <interactant intactId="EBI-10204280">
        <id>A0A0S2Z4U3</id>
        <label>SDC3</label>
    </interactant>
    <organismsDiffer>false</organismsDiffer>
    <experiments>3</experiments>
</comment>
<comment type="interaction">
    <interactant intactId="EBI-11749135">
        <id>Q8IUG1</id>
    </interactant>
    <interactant intactId="EBI-727004">
        <id>O00560</id>
        <label>SDCBP</label>
    </interactant>
    <organismsDiffer>false</organismsDiffer>
    <experiments>3</experiments>
</comment>
<comment type="interaction">
    <interactant intactId="EBI-11749135">
        <id>Q8IUG1</id>
    </interactant>
    <interactant intactId="EBI-10277687">
        <id>Q8WWX9</id>
        <label>SELENOM</label>
    </interactant>
    <organismsDiffer>false</organismsDiffer>
    <experiments>3</experiments>
</comment>
<comment type="interaction">
    <interactant intactId="EBI-11749135">
        <id>Q8IUG1</id>
    </interactant>
    <interactant intactId="EBI-11955083">
        <id>Q9NUL5-4</id>
        <label>SHFL</label>
    </interactant>
    <organismsDiffer>false</organismsDiffer>
    <experiments>3</experiments>
</comment>
<comment type="interaction">
    <interactant intactId="EBI-11749135">
        <id>Q8IUG1</id>
    </interactant>
    <interactant intactId="EBI-12002412">
        <id>Q86YT5</id>
        <label>SLC13A5</label>
    </interactant>
    <organismsDiffer>false</organismsDiffer>
    <experiments>3</experiments>
</comment>
<comment type="interaction">
    <interactant intactId="EBI-11749135">
        <id>Q8IUG1</id>
    </interactant>
    <interactant intactId="EBI-12081840">
        <id>A1A5C7-2</id>
        <label>SLC22A23</label>
    </interactant>
    <organismsDiffer>false</organismsDiffer>
    <experiments>3</experiments>
</comment>
<comment type="interaction">
    <interactant intactId="EBI-11749135">
        <id>Q8IUG1</id>
    </interactant>
    <interactant intactId="EBI-11998660">
        <id>Q9UHI7-3</id>
        <label>SLC23A1</label>
    </interactant>
    <organismsDiffer>false</organismsDiffer>
    <experiments>3</experiments>
</comment>
<comment type="interaction">
    <interactant intactId="EBI-11749135">
        <id>Q8IUG1</id>
    </interactant>
    <interactant intactId="EBI-1051105">
        <id>Q92504</id>
        <label>SLC39A7</label>
    </interactant>
    <organismsDiffer>false</organismsDiffer>
    <experiments>3</experiments>
</comment>
<comment type="interaction">
    <interactant intactId="EBI-11749135">
        <id>Q8IUG1</id>
    </interactant>
    <interactant intactId="EBI-10265149">
        <id>Q8N370</id>
        <label>SLC43A2</label>
    </interactant>
    <organismsDiffer>false</organismsDiffer>
    <experiments>3</experiments>
</comment>
<comment type="interaction">
    <interactant intactId="EBI-11749135">
        <id>Q8IUG1</id>
    </interactant>
    <interactant intactId="EBI-3843348">
        <id>Q9UPY5</id>
        <label>SLC7A11</label>
    </interactant>
    <organismsDiffer>false</organismsDiffer>
    <experiments>3</experiments>
</comment>
<comment type="interaction">
    <interactant intactId="EBI-11749135">
        <id>Q8IUG1</id>
    </interactant>
    <interactant intactId="EBI-750494">
        <id>P49901</id>
        <label>SMCP</label>
    </interactant>
    <organismsDiffer>false</organismsDiffer>
    <experiments>3</experiments>
</comment>
<comment type="interaction">
    <interactant intactId="EBI-11749135">
        <id>Q8IUG1</id>
    </interactant>
    <interactant intactId="EBI-12078338">
        <id>O43278-2</id>
        <label>SPINT1</label>
    </interactant>
    <organismsDiffer>false</organismsDiffer>
    <experiments>3</experiments>
</comment>
<comment type="interaction">
    <interactant intactId="EBI-11749135">
        <id>Q8IUG1</id>
    </interactant>
    <interactant intactId="EBI-3866665">
        <id>O43609</id>
        <label>SPRY1</label>
    </interactant>
    <organismsDiffer>false</organismsDiffer>
    <experiments>3</experiments>
</comment>
<comment type="interaction">
    <interactant intactId="EBI-11749135">
        <id>Q8IUG1</id>
    </interactant>
    <interactant intactId="EBI-749295">
        <id>O75716</id>
        <label>STK16</label>
    </interactant>
    <organismsDiffer>false</organismsDiffer>
    <experiments>3</experiments>
</comment>
<comment type="interaction">
    <interactant intactId="EBI-11749135">
        <id>Q8IUG1</id>
    </interactant>
    <interactant intactId="EBI-2866213">
        <id>Q92537</id>
        <label>SUSD6</label>
    </interactant>
    <organismsDiffer>false</organismsDiffer>
    <experiments>3</experiments>
</comment>
<comment type="interaction">
    <interactant intactId="EBI-11749135">
        <id>Q8IUG1</id>
    </interactant>
    <interactant intactId="EBI-4324738">
        <id>P09758</id>
        <label>TACSTD2</label>
    </interactant>
    <organismsDiffer>false</organismsDiffer>
    <experiments>3</experiments>
</comment>
<comment type="interaction">
    <interactant intactId="EBI-11749135">
        <id>Q8IUG1</id>
    </interactant>
    <interactant intactId="EBI-11974855">
        <id>Q9Y4C2-2</id>
        <label>TCAF1</label>
    </interactant>
    <organismsDiffer>false</organismsDiffer>
    <experiments>3</experiments>
</comment>
<comment type="interaction">
    <interactant intactId="EBI-11749135">
        <id>Q8IUG1</id>
    </interactant>
    <interactant intactId="EBI-11952651">
        <id>Q7Z6R9</id>
        <label>TFAP2D</label>
    </interactant>
    <organismsDiffer>false</organismsDiffer>
    <experiments>3</experiments>
</comment>
<comment type="interaction">
    <interactant intactId="EBI-11749135">
        <id>Q8IUG1</id>
    </interactant>
    <interactant intactId="EBI-779636">
        <id>P01137</id>
        <label>TGFB1</label>
    </interactant>
    <organismsDiffer>false</organismsDiffer>
    <experiments>3</experiments>
</comment>
<comment type="interaction">
    <interactant intactId="EBI-11749135">
        <id>Q8IUG1</id>
    </interactant>
    <interactant intactId="EBI-741350">
        <id>Q9BT49</id>
        <label>THAP7</label>
    </interactant>
    <organismsDiffer>false</organismsDiffer>
    <experiments>3</experiments>
</comment>
<comment type="interaction">
    <interactant intactId="EBI-11749135">
        <id>Q8IUG1</id>
    </interactant>
    <interactant intactId="EBI-11997340">
        <id>P0DTL5</id>
        <label>TMEM276</label>
    </interactant>
    <organismsDiffer>false</organismsDiffer>
    <experiments>3</experiments>
</comment>
<comment type="interaction">
    <interactant intactId="EBI-11749135">
        <id>Q8IUG1</id>
    </interactant>
    <interactant intactId="EBI-949753">
        <id>Q63HR2</id>
        <label>TNS2</label>
    </interactant>
    <organismsDiffer>false</organismsDiffer>
    <experiments>5</experiments>
</comment>
<comment type="interaction">
    <interactant intactId="EBI-11749135">
        <id>Q8IUG1</id>
    </interactant>
    <interactant intactId="EBI-711260">
        <id>Q13432</id>
        <label>UNC119</label>
    </interactant>
    <organismsDiffer>false</organismsDiffer>
    <experiments>3</experiments>
</comment>
<comment type="interaction">
    <interactant intactId="EBI-11749135">
        <id>Q8IUG1</id>
    </interactant>
    <interactant intactId="EBI-5457544">
        <id>Q9BRU9</id>
        <label>UTP23</label>
    </interactant>
    <organismsDiffer>false</organismsDiffer>
    <experiments>3</experiments>
</comment>
<comment type="interaction">
    <interactant intactId="EBI-11749135">
        <id>Q8IUG1</id>
    </interactant>
    <interactant intactId="EBI-357355">
        <id>Q9UBK9</id>
        <label>UXT</label>
    </interactant>
    <organismsDiffer>false</organismsDiffer>
    <experiments>3</experiments>
</comment>
<comment type="interaction">
    <interactant intactId="EBI-11749135">
        <id>Q8IUG1</id>
    </interactant>
    <interactant intactId="EBI-10249550">
        <id>Q6EMK4</id>
        <label>VASN</label>
    </interactant>
    <organismsDiffer>false</organismsDiffer>
    <experiments>3</experiments>
</comment>
<comment type="interaction">
    <interactant intactId="EBI-11749135">
        <id>Q8IUG1</id>
    </interactant>
    <interactant intactId="EBI-4311759">
        <id>Q8IW00</id>
        <label>VSTM4</label>
    </interactant>
    <organismsDiffer>false</organismsDiffer>
    <experiments>3</experiments>
</comment>
<comment type="interaction">
    <interactant intactId="EBI-11749135">
        <id>Q8IUG1</id>
    </interactant>
    <interactant intactId="EBI-8058160">
        <id>O96014</id>
        <label>WNT11</label>
    </interactant>
    <organismsDiffer>false</organismsDiffer>
    <experiments>3</experiments>
</comment>
<comment type="interaction">
    <interactant intactId="EBI-11749135">
        <id>Q8IUG1</id>
    </interactant>
    <interactant intactId="EBI-10319095">
        <id>Q9UBD3</id>
        <label>XCL2</label>
    </interactant>
    <organismsDiffer>false</organismsDiffer>
    <experiments>3</experiments>
</comment>
<comment type="interaction">
    <interactant intactId="EBI-11749135">
        <id>Q8IUG1</id>
    </interactant>
    <interactant intactId="EBI-743787">
        <id>Q9GZM5</id>
        <label>YIPF3</label>
    </interactant>
    <organismsDiffer>false</organismsDiffer>
    <experiments>3</experiments>
</comment>
<comment type="interaction">
    <interactant intactId="EBI-11749135">
        <id>Q8IUG1</id>
    </interactant>
    <interactant intactId="EBI-765538">
        <id>P25490</id>
        <label>YY1</label>
    </interactant>
    <organismsDiffer>false</organismsDiffer>
    <experiments>3</experiments>
</comment>
<comment type="interaction">
    <interactant intactId="EBI-11749135">
        <id>Q8IUG1</id>
    </interactant>
    <interactant intactId="EBI-2818796">
        <id>Q8WTX9</id>
        <label>ZDHHC1</label>
    </interactant>
    <organismsDiffer>false</organismsDiffer>
    <experiments>3</experiments>
</comment>
<comment type="interaction">
    <interactant intactId="EBI-11749135">
        <id>Q8IUG1</id>
    </interactant>
    <interactant intactId="EBI-373456">
        <id>Q9Y3S2</id>
        <label>ZNF330</label>
    </interactant>
    <organismsDiffer>false</organismsDiffer>
    <experiments>3</experiments>
</comment>
<comment type="interaction">
    <interactant intactId="EBI-11749135">
        <id>Q8IUG1</id>
    </interactant>
    <interactant intactId="EBI-744257">
        <id>Q96IQ9</id>
        <label>ZNF414</label>
    </interactant>
    <organismsDiffer>false</organismsDiffer>
    <experiments>3</experiments>
</comment>
<comment type="interaction">
    <interactant intactId="EBI-11749135">
        <id>Q8IUG1</id>
    </interactant>
    <interactant intactId="EBI-740727">
        <id>Q8TAU3</id>
        <label>ZNF417</label>
    </interactant>
    <organismsDiffer>false</organismsDiffer>
    <experiments>3</experiments>
</comment>
<comment type="interaction">
    <interactant intactId="EBI-11749135">
        <id>Q8IUG1</id>
    </interactant>
    <interactant intactId="EBI-726439">
        <id>Q8IYI8</id>
        <label>ZNF440</label>
    </interactant>
    <organismsDiffer>false</organismsDiffer>
    <experiments>3</experiments>
</comment>
<comment type="interaction">
    <interactant intactId="EBI-11749135">
        <id>Q8IUG1</id>
    </interactant>
    <interactant intactId="EBI-740232">
        <id>Q9NWS9-2</id>
        <label>ZNF446</label>
    </interactant>
    <organismsDiffer>false</organismsDiffer>
    <experiments>3</experiments>
</comment>
<comment type="interaction">
    <interactant intactId="EBI-11749135">
        <id>Q8IUG1</id>
    </interactant>
    <interactant intactId="EBI-10486136">
        <id>Q6ZNH5</id>
        <label>ZNF497</label>
    </interactant>
    <organismsDiffer>false</organismsDiffer>
    <experiments>3</experiments>
</comment>
<comment type="interaction">
    <interactant intactId="EBI-11749135">
        <id>Q8IUG1</id>
    </interactant>
    <interactant intactId="EBI-6427977">
        <id>Q96SQ5</id>
        <label>ZNF587</label>
    </interactant>
    <organismsDiffer>false</organismsDiffer>
    <experiments>3</experiments>
</comment>
<comment type="interaction">
    <interactant intactId="EBI-11749135">
        <id>Q8IUG1</id>
    </interactant>
    <interactant intactId="EBI-11090299">
        <id>Q9H7X3</id>
        <label>ZNF696</label>
    </interactant>
    <organismsDiffer>false</organismsDiffer>
    <experiments>3</experiments>
</comment>
<comment type="interaction">
    <interactant intactId="EBI-11749135">
        <id>Q8IUG1</id>
    </interactant>
    <interactant intactId="EBI-745775">
        <id>Q96H86</id>
        <label>ZNF764</label>
    </interactant>
    <organismsDiffer>false</organismsDiffer>
    <experiments>3</experiments>
</comment>
<comment type="interaction">
    <interactant intactId="EBI-11749135">
        <id>Q8IUG1</id>
    </interactant>
    <interactant intactId="EBI-10265203">
        <id>Q8N393</id>
        <label>ZNF786</label>
    </interactant>
    <organismsDiffer>false</organismsDiffer>
    <experiments>3</experiments>
</comment>
<comment type="interaction">
    <interactant intactId="EBI-11749135">
        <id>Q8IUG1</id>
    </interactant>
    <interactant intactId="EBI-11962574">
        <id>Q96EG3</id>
        <label>ZNF837</label>
    </interactant>
    <organismsDiffer>false</organismsDiffer>
    <experiments>3</experiments>
</comment>
<comment type="interaction">
    <interactant intactId="EBI-11749135">
        <id>Q8IUG1</id>
    </interactant>
    <interactant intactId="EBI-10211777">
        <id>A0A384ME25</id>
    </interactant>
    <organismsDiffer>false</organismsDiffer>
    <experiments>3</experiments>
</comment>
<comment type="tissue specificity">
    <text evidence="2">Expressed in the middle/upper portions of the hair cortex, in the region termed the keratogenous zone.</text>
</comment>
<comment type="polymorphism">
    <text evidence="6">The sequence shown is that of allele KAP1.3.</text>
</comment>
<comment type="similarity">
    <text evidence="6">Belongs to the KRTAP type 1 family.</text>
</comment>
<comment type="sequence caution" evidence="6">
    <conflict type="frameshift">
        <sequence resource="EMBL-CDS" id="CAA44938"/>
    </conflict>
</comment>
<name>KRA13_HUMAN</name>
<reference key="1">
    <citation type="journal article" date="1992" name="Mol. Biol. (Mosk.)">
        <title>[Cloning and structural characteristics of human hair keratin genes rich in sulfur].</title>
        <authorList>
            <person name="Zhumabaeva B.D."/>
            <person name="Gening L.V."/>
            <person name="Gazarian K.G."/>
        </authorList>
    </citation>
    <scope>NUCLEOTIDE SEQUENCE [GENOMIC DNA]</scope>
    <scope>VARIANT GLU-THR-SER-CYS-CYS-GLN-PRO-SER-CYS-CYS-40 INS</scope>
</reference>
<reference key="2">
    <citation type="journal article" date="2001" name="J. Biol. Chem.">
        <title>Characterization of a cluster of human high/ultrahigh sulfur keratin-associated protein genes embedded in the type I keratin gene domain on chromosome 17q12-21.</title>
        <authorList>
            <person name="Rogers M.A."/>
            <person name="Langbein L."/>
            <person name="Winter H."/>
            <person name="Ehmann C."/>
            <person name="Praetzel S."/>
            <person name="Korn B."/>
            <person name="Schweizer J."/>
        </authorList>
    </citation>
    <scope>NUCLEOTIDE SEQUENCE [MRNA]</scope>
    <scope>TISSUE SPECIFICITY</scope>
    <source>
        <tissue>Scalp</tissue>
    </source>
</reference>
<reference key="3">
    <citation type="journal article" date="2002" name="J. Biol. Chem.">
        <title>Polymorphisms in the human high sulfur hair keratin-associated protein 1, KAP1, gene family.</title>
        <authorList>
            <person name="Shimomura Y."/>
            <person name="Aoki N."/>
            <person name="Schweizer J."/>
            <person name="Langbein L."/>
            <person name="Rogers M.A."/>
            <person name="Winter H."/>
            <person name="Ito M."/>
        </authorList>
    </citation>
    <scope>NUCLEOTIDE SEQUENCE [GENOMIC DNA / MRNA]</scope>
    <scope>VARIANTS SER-34; GLU-THR-SER-CYS-CYS-GLN-PRO-SER-CYS-CYS-40 INS; 41-GLN--CYS-66 DEL AND ARG-82</scope>
    <source>
        <tissue>Scalp</tissue>
    </source>
</reference>
<reference key="4">
    <citation type="journal article" date="2004" name="Genome Res.">
        <title>The status, quality, and expansion of the NIH full-length cDNA project: the Mammalian Gene Collection (MGC).</title>
        <authorList>
            <consortium name="The MGC Project Team"/>
        </authorList>
    </citation>
    <scope>NUCLEOTIDE SEQUENCE [LARGE SCALE MRNA]</scope>
    <scope>VARIANT GLU-THR-SER-CYS-CYS-GLN-PRO-SER-CYS-CYS-40 INS</scope>
</reference>
<proteinExistence type="evidence at protein level"/>
<dbReference type="EMBL" id="X63338">
    <property type="protein sequence ID" value="CAA44938.1"/>
    <property type="status" value="ALT_FRAME"/>
    <property type="molecule type" value="Genomic_DNA"/>
</dbReference>
<dbReference type="EMBL" id="AJ406927">
    <property type="protein sequence ID" value="CAC27566.1"/>
    <property type="molecule type" value="mRNA"/>
</dbReference>
<dbReference type="EMBL" id="AB081338">
    <property type="protein sequence ID" value="BAC15619.1"/>
    <property type="molecule type" value="mRNA"/>
</dbReference>
<dbReference type="EMBL" id="AB081339">
    <property type="protein sequence ID" value="BAC15620.1"/>
    <property type="molecule type" value="Genomic_DNA"/>
</dbReference>
<dbReference type="EMBL" id="BC069161">
    <property type="protein sequence ID" value="AAH69161.1"/>
    <property type="molecule type" value="mRNA"/>
</dbReference>
<dbReference type="EMBL" id="BC101150">
    <property type="protein sequence ID" value="AAI01151.1"/>
    <property type="molecule type" value="mRNA"/>
</dbReference>
<dbReference type="EMBL" id="BC101151">
    <property type="protein sequence ID" value="AAI01152.1"/>
    <property type="molecule type" value="mRNA"/>
</dbReference>
<dbReference type="EMBL" id="BC101152">
    <property type="protein sequence ID" value="AAI01153.1"/>
    <property type="molecule type" value="mRNA"/>
</dbReference>
<dbReference type="EMBL" id="BC101153">
    <property type="protein sequence ID" value="AAI01154.1"/>
    <property type="molecule type" value="mRNA"/>
</dbReference>
<dbReference type="CCDS" id="CCDS42323.1"/>
<dbReference type="PIR" id="S37649">
    <property type="entry name" value="S37649"/>
</dbReference>
<dbReference type="RefSeq" id="NP_112228.1">
    <property type="nucleotide sequence ID" value="NM_030966.2"/>
</dbReference>
<dbReference type="BioGRID" id="123601">
    <property type="interactions" value="183"/>
</dbReference>
<dbReference type="FunCoup" id="Q8IUG1">
    <property type="interactions" value="48"/>
</dbReference>
<dbReference type="IntAct" id="Q8IUG1">
    <property type="interactions" value="174"/>
</dbReference>
<dbReference type="STRING" id="9606.ENSP00000344420"/>
<dbReference type="BioMuta" id="KRTAP1-3"/>
<dbReference type="DMDM" id="74723628"/>
<dbReference type="jPOST" id="Q8IUG1"/>
<dbReference type="MassIVE" id="Q8IUG1"/>
<dbReference type="PeptideAtlas" id="Q8IUG1"/>
<dbReference type="ProteomicsDB" id="70562"/>
<dbReference type="Antibodypedia" id="68306">
    <property type="antibodies" value="56 antibodies from 12 providers"/>
</dbReference>
<dbReference type="DNASU" id="81850"/>
<dbReference type="Ensembl" id="ENST00000344363.7">
    <property type="protein sequence ID" value="ENSP00000344420.5"/>
    <property type="gene ID" value="ENSG00000221880.4"/>
</dbReference>
<dbReference type="Ensembl" id="ENST00000575715.2">
    <property type="protein sequence ID" value="ENSP00000461303.1"/>
    <property type="gene ID" value="ENSG00000262347.2"/>
</dbReference>
<dbReference type="GeneID" id="81850"/>
<dbReference type="KEGG" id="hsa:81850"/>
<dbReference type="MANE-Select" id="ENST00000344363.7">
    <property type="protein sequence ID" value="ENSP00000344420.5"/>
    <property type="RefSeq nucleotide sequence ID" value="NM_030966.2"/>
    <property type="RefSeq protein sequence ID" value="NP_112228.1"/>
</dbReference>
<dbReference type="UCSC" id="uc002hvv.4">
    <property type="organism name" value="human"/>
</dbReference>
<dbReference type="AGR" id="HGNC:16771"/>
<dbReference type="CTD" id="81850"/>
<dbReference type="DisGeNET" id="81850"/>
<dbReference type="GeneCards" id="KRTAP1-3"/>
<dbReference type="HGNC" id="HGNC:16771">
    <property type="gene designation" value="KRTAP1-3"/>
</dbReference>
<dbReference type="HPA" id="ENSG00000221880">
    <property type="expression patterns" value="Tissue enriched (skin)"/>
</dbReference>
<dbReference type="MIM" id="608820">
    <property type="type" value="gene"/>
</dbReference>
<dbReference type="neXtProt" id="NX_Q8IUG1"/>
<dbReference type="OpenTargets" id="ENSG00000221880"/>
<dbReference type="PharmGKB" id="PA38411"/>
<dbReference type="VEuPathDB" id="HostDB:ENSG00000221880"/>
<dbReference type="eggNOG" id="KOG4726">
    <property type="taxonomic scope" value="Eukaryota"/>
</dbReference>
<dbReference type="GeneTree" id="ENSGT00940000160443"/>
<dbReference type="HOGENOM" id="CLU_109417_0_0_1"/>
<dbReference type="InParanoid" id="Q8IUG1"/>
<dbReference type="OMA" id="CYSCEPT"/>
<dbReference type="PAN-GO" id="Q8IUG1">
    <property type="GO annotations" value="0 GO annotations based on evolutionary models"/>
</dbReference>
<dbReference type="TreeFam" id="TF351356"/>
<dbReference type="PathwayCommons" id="Q8IUG1"/>
<dbReference type="Reactome" id="R-HSA-6805567">
    <property type="pathway name" value="Keratinization"/>
</dbReference>
<dbReference type="BioGRID-ORCS" id="81850">
    <property type="hits" value="10 hits in 1036 CRISPR screens"/>
</dbReference>
<dbReference type="GenomeRNAi" id="81850"/>
<dbReference type="Pharos" id="Q8IUG1">
    <property type="development level" value="Tbio"/>
</dbReference>
<dbReference type="PRO" id="PR:Q8IUG1"/>
<dbReference type="Proteomes" id="UP000005640">
    <property type="component" value="Chromosome 17"/>
</dbReference>
<dbReference type="RNAct" id="Q8IUG1">
    <property type="molecule type" value="protein"/>
</dbReference>
<dbReference type="Bgee" id="ENSG00000221880">
    <property type="expression patterns" value="Expressed in skin of abdomen and 36 other cell types or tissues"/>
</dbReference>
<dbReference type="GO" id="GO:0005829">
    <property type="term" value="C:cytosol"/>
    <property type="evidence" value="ECO:0000304"/>
    <property type="project" value="Reactome"/>
</dbReference>
<dbReference type="GO" id="GO:0045095">
    <property type="term" value="C:keratin filament"/>
    <property type="evidence" value="ECO:0007669"/>
    <property type="project" value="InterPro"/>
</dbReference>
<dbReference type="GO" id="GO:0030280">
    <property type="term" value="F:structural constituent of skin epidermis"/>
    <property type="evidence" value="ECO:0000303"/>
    <property type="project" value="UniProtKB"/>
</dbReference>
<dbReference type="InterPro" id="IPR002494">
    <property type="entry name" value="KAP"/>
</dbReference>
<dbReference type="Pfam" id="PF01500">
    <property type="entry name" value="Keratin_B2"/>
    <property type="match status" value="1"/>
</dbReference>
<evidence type="ECO:0000250" key="1"/>
<evidence type="ECO:0000269" key="2">
    <source>
    </source>
</evidence>
<evidence type="ECO:0000269" key="3">
    <source>
    </source>
</evidence>
<evidence type="ECO:0000269" key="4">
    <source>
    </source>
</evidence>
<evidence type="ECO:0000269" key="5">
    <source>
    </source>
</evidence>
<evidence type="ECO:0000305" key="6"/>
<keyword id="KW-0416">Keratin</keyword>
<keyword id="KW-1267">Proteomics identification</keyword>
<keyword id="KW-1185">Reference proteome</keyword>
<keyword id="KW-0677">Repeat</keyword>
<organism>
    <name type="scientific">Homo sapiens</name>
    <name type="common">Human</name>
    <dbReference type="NCBI Taxonomy" id="9606"/>
    <lineage>
        <taxon>Eukaryota</taxon>
        <taxon>Metazoa</taxon>
        <taxon>Chordata</taxon>
        <taxon>Craniata</taxon>
        <taxon>Vertebrata</taxon>
        <taxon>Euteleostomi</taxon>
        <taxon>Mammalia</taxon>
        <taxon>Eutheria</taxon>
        <taxon>Euarchontoglires</taxon>
        <taxon>Primates</taxon>
        <taxon>Haplorrhini</taxon>
        <taxon>Catarrhini</taxon>
        <taxon>Hominidae</taxon>
        <taxon>Homo</taxon>
    </lineage>
</organism>
<accession>Q8IUG1</accession>
<accession>Q07628</accession>
<accession>Q8IUG0</accession>
<accession>Q9BYS2</accession>
<gene>
    <name type="primary">KRTAP1-3</name>
    <name type="synonym">B2B</name>
    <name type="synonym">KAP1.2</name>
    <name type="synonym">KAP1.3</name>
    <name type="synonym">KAP1.8</name>
    <name type="synonym">KAP1.9</name>
    <name type="synonym">KRATP1.9</name>
    <name type="synonym">KRTAP1.8</name>
</gene>
<feature type="chain" id="PRO_0000223902" description="Keratin-associated protein 1-3">
    <location>
        <begin position="1"/>
        <end position="167"/>
    </location>
</feature>
<feature type="sequence variant" id="VAR_025349" description="In allele KAP1.8B; dbSNP:rs62624960." evidence="3">
    <original>C</original>
    <variation>S</variation>
    <location>
        <position position="34"/>
    </location>
</feature>
<feature type="sequence variant" id="VAR_085002" description="In allele KAP1.8A." evidence="3 4 5">
    <original>C</original>
    <variation>CETSCCQPSCC</variation>
    <location>
        <position position="40"/>
    </location>
</feature>
<feature type="sequence variant" id="VAR_025351" description="In allele KAP1.9." evidence="3">
    <location>
        <begin position="41"/>
        <end position="66"/>
    </location>
</feature>
<feature type="sequence variant" id="VAR_025352" description="In allele KAP1.8B." evidence="3">
    <original>G</original>
    <variation>R</variation>
    <location>
        <position position="82"/>
    </location>
</feature>